<accession>P0C0I7</accession>
<accession>Q9X5C8</accession>
<reference key="1">
    <citation type="journal article" date="2001" name="Proc. Natl. Acad. Sci. U.S.A.">
        <title>Complete genome sequence of an M1 strain of Streptococcus pyogenes.</title>
        <authorList>
            <person name="Ferretti J.J."/>
            <person name="McShan W.M."/>
            <person name="Ajdic D.J."/>
            <person name="Savic D.J."/>
            <person name="Savic G."/>
            <person name="Lyon K."/>
            <person name="Primeaux C."/>
            <person name="Sezate S."/>
            <person name="Suvorov A.N."/>
            <person name="Kenton S."/>
            <person name="Lai H.S."/>
            <person name="Lin S.P."/>
            <person name="Qian Y."/>
            <person name="Jia H.G."/>
            <person name="Najar F.Z."/>
            <person name="Ren Q."/>
            <person name="Zhu H."/>
            <person name="Song L."/>
            <person name="White J."/>
            <person name="Yuan X."/>
            <person name="Clifton S.W."/>
            <person name="Roe B.A."/>
            <person name="McLaughlin R.E."/>
        </authorList>
    </citation>
    <scope>NUCLEOTIDE SEQUENCE [LARGE SCALE GENOMIC DNA]</scope>
    <source>
        <strain>ATCC 700294 / SF370 / Serotype M1</strain>
    </source>
</reference>
<organism>
    <name type="scientific">Streptococcus pyogenes serotype M1</name>
    <dbReference type="NCBI Taxonomy" id="301447"/>
    <lineage>
        <taxon>Bacteria</taxon>
        <taxon>Bacillati</taxon>
        <taxon>Bacillota</taxon>
        <taxon>Bacilli</taxon>
        <taxon>Lactobacillales</taxon>
        <taxon>Streptococcaceae</taxon>
        <taxon>Streptococcus</taxon>
    </lineage>
</organism>
<evidence type="ECO:0000250" key="1"/>
<evidence type="ECO:0000255" key="2"/>
<evidence type="ECO:0000305" key="3"/>
<feature type="signal peptide" evidence="2">
    <location>
        <begin position="1"/>
        <end position="32"/>
    </location>
</feature>
<feature type="chain" id="PRO_0000041943" description="Exotoxin type H">
    <location>
        <begin position="33"/>
        <end position="236"/>
    </location>
</feature>
<gene>
    <name type="primary">speH</name>
    <name type="ordered locus">SPy_1008</name>
</gene>
<dbReference type="EMBL" id="AE004092">
    <property type="protein sequence ID" value="AAK33907.1"/>
    <property type="molecule type" value="Genomic_DNA"/>
</dbReference>
<dbReference type="RefSeq" id="NP_269186.1">
    <property type="nucleotide sequence ID" value="NC_002737.2"/>
</dbReference>
<dbReference type="SMR" id="P0C0I7"/>
<dbReference type="PaxDb" id="1314-HKU360_00806"/>
<dbReference type="KEGG" id="spy:SPy_1008"/>
<dbReference type="PATRIC" id="fig|160490.10.peg.869"/>
<dbReference type="HOGENOM" id="CLU_093855_1_0_9"/>
<dbReference type="OMA" id="AQEACEC"/>
<dbReference type="Proteomes" id="UP000000750">
    <property type="component" value="Chromosome"/>
</dbReference>
<dbReference type="GO" id="GO:0005576">
    <property type="term" value="C:extracellular region"/>
    <property type="evidence" value="ECO:0007669"/>
    <property type="project" value="UniProtKB-SubCell"/>
</dbReference>
<dbReference type="GO" id="GO:0090729">
    <property type="term" value="F:toxin activity"/>
    <property type="evidence" value="ECO:0007669"/>
    <property type="project" value="UniProtKB-KW"/>
</dbReference>
<dbReference type="Gene3D" id="2.40.50.110">
    <property type="match status" value="1"/>
</dbReference>
<dbReference type="Gene3D" id="3.10.20.120">
    <property type="match status" value="1"/>
</dbReference>
<dbReference type="InterPro" id="IPR008992">
    <property type="entry name" value="Enterotoxin"/>
</dbReference>
<dbReference type="InterPro" id="IPR006126">
    <property type="entry name" value="Staph/Strept_toxin_CS"/>
</dbReference>
<dbReference type="InterPro" id="IPR006173">
    <property type="entry name" value="Staph_tox_OB"/>
</dbReference>
<dbReference type="InterPro" id="IPR016091">
    <property type="entry name" value="SuperAg_toxin_C"/>
</dbReference>
<dbReference type="InterPro" id="IPR013307">
    <property type="entry name" value="Superantigen_bac"/>
</dbReference>
<dbReference type="InterPro" id="IPR006123">
    <property type="entry name" value="Toxin_b-grasp_Staph/Strep"/>
</dbReference>
<dbReference type="Pfam" id="PF02876">
    <property type="entry name" value="Stap_Strp_tox_C"/>
    <property type="match status" value="1"/>
</dbReference>
<dbReference type="Pfam" id="PF01123">
    <property type="entry name" value="Stap_Strp_toxin"/>
    <property type="match status" value="1"/>
</dbReference>
<dbReference type="PRINTS" id="PR01898">
    <property type="entry name" value="SAGSUPRFAMLY"/>
</dbReference>
<dbReference type="SUPFAM" id="SSF50203">
    <property type="entry name" value="Bacterial enterotoxins"/>
    <property type="match status" value="1"/>
</dbReference>
<dbReference type="SUPFAM" id="SSF54334">
    <property type="entry name" value="Superantigen toxins, C-terminal domain"/>
    <property type="match status" value="1"/>
</dbReference>
<dbReference type="PROSITE" id="PS00278">
    <property type="entry name" value="STAPH_STREP_TOXIN_2"/>
    <property type="match status" value="1"/>
</dbReference>
<name>SPEH_STRP1</name>
<sequence>MRYNCRYSHIDKKIYSMIICLSFLLYSNVVQANSYNTTNRHNLESLYKHDSNLIEADSIKNSPDIVTSHMLKYSVKDKNLSVFFEKDWISQEFKDKEVDIYALSAQEVCECPGKRYEAFGGITLTNSEKKEIKVPVNVWDKSKQQPPMFITVNKPKVTAQEVDIKVRKLLIKKYDIYNNREQKYSKGTVTLDLNSGKDIVFDLYYFGNGDFNSMLKIYSNNERIDSTQFHVDVSIS</sequence>
<comment type="function">
    <text evidence="1">Mitogenic for human peripheral blood lymphocytes.</text>
</comment>
<comment type="subcellular location">
    <subcellularLocation>
        <location evidence="1">Secreted</location>
    </subcellularLocation>
</comment>
<comment type="miscellaneous">
    <text evidence="1">Binds to major histocompatibility complex class II beta chain.</text>
</comment>
<comment type="similarity">
    <text evidence="3">Belongs to the staphylococcal/streptococcal toxin family.</text>
</comment>
<proteinExistence type="inferred from homology"/>
<protein>
    <recommendedName>
        <fullName>Exotoxin type H</fullName>
    </recommendedName>
    <alternativeName>
        <fullName>SPE H</fullName>
    </alternativeName>
</protein>
<keyword id="KW-1185">Reference proteome</keyword>
<keyword id="KW-0964">Secreted</keyword>
<keyword id="KW-0732">Signal</keyword>
<keyword id="KW-0800">Toxin</keyword>
<keyword id="KW-0843">Virulence</keyword>